<name>Y325_STRPF</name>
<reference key="1">
    <citation type="journal article" date="2006" name="Proc. Natl. Acad. Sci. U.S.A.">
        <title>Molecular genetic anatomy of inter- and intraserotype variation in the human bacterial pathogen group A Streptococcus.</title>
        <authorList>
            <person name="Beres S.B."/>
            <person name="Richter E.W."/>
            <person name="Nagiec M.J."/>
            <person name="Sumby P."/>
            <person name="Porcella S.F."/>
            <person name="DeLeo F.R."/>
            <person name="Musser J.M."/>
        </authorList>
    </citation>
    <scope>NUCLEOTIDE SEQUENCE [LARGE SCALE GENOMIC DNA]</scope>
    <source>
        <strain>MGAS10750</strain>
    </source>
</reference>
<organism>
    <name type="scientific">Streptococcus pyogenes serotype M4 (strain MGAS10750)</name>
    <dbReference type="NCBI Taxonomy" id="370554"/>
    <lineage>
        <taxon>Bacteria</taxon>
        <taxon>Bacillati</taxon>
        <taxon>Bacillota</taxon>
        <taxon>Bacilli</taxon>
        <taxon>Lactobacillales</taxon>
        <taxon>Streptococcaceae</taxon>
        <taxon>Streptococcus</taxon>
    </lineage>
</organism>
<dbReference type="EMBL" id="CP000262">
    <property type="protein sequence ID" value="ABF37275.1"/>
    <property type="molecule type" value="Genomic_DNA"/>
</dbReference>
<dbReference type="SMR" id="Q1J886"/>
<dbReference type="KEGG" id="spi:MGAS10750_Spy0325"/>
<dbReference type="HOGENOM" id="CLU_159890_1_0_9"/>
<dbReference type="Proteomes" id="UP000002434">
    <property type="component" value="Chromosome"/>
</dbReference>
<dbReference type="GO" id="GO:0005737">
    <property type="term" value="C:cytoplasm"/>
    <property type="evidence" value="ECO:0007669"/>
    <property type="project" value="UniProtKB-SubCell"/>
</dbReference>
<dbReference type="HAMAP" id="MF_01126">
    <property type="entry name" value="UPF0298"/>
    <property type="match status" value="1"/>
</dbReference>
<dbReference type="InterPro" id="IPR016979">
    <property type="entry name" value="DUF2129"/>
</dbReference>
<dbReference type="NCBIfam" id="NF002631">
    <property type="entry name" value="PRK02302.1"/>
    <property type="match status" value="1"/>
</dbReference>
<dbReference type="Pfam" id="PF09902">
    <property type="entry name" value="DUF2129"/>
    <property type="match status" value="1"/>
</dbReference>
<dbReference type="PIRSF" id="PIRSF031653">
    <property type="entry name" value="UCP031653"/>
    <property type="match status" value="1"/>
</dbReference>
<gene>
    <name type="ordered locus">MGAS10750_Spy0325</name>
</gene>
<protein>
    <recommendedName>
        <fullName evidence="1">UPF0298 protein MGAS10750_Spy0325</fullName>
    </recommendedName>
</protein>
<keyword id="KW-0963">Cytoplasm</keyword>
<proteinExistence type="inferred from homology"/>
<accession>Q1J886</accession>
<feature type="chain" id="PRO_1000065371" description="UPF0298 protein MGAS10750_Spy0325">
    <location>
        <begin position="1"/>
        <end position="97"/>
    </location>
</feature>
<sequence>MFQKQERIGLVVYLYYNRDARKLSKFGDLYYHSKRSRYLIIYINKNDLDTKLEEMRRLKCVKDIRPSAFDDIDRQFVGNLHRDETNNHQKGYQPPSY</sequence>
<comment type="subcellular location">
    <subcellularLocation>
        <location evidence="1">Cytoplasm</location>
    </subcellularLocation>
</comment>
<comment type="similarity">
    <text evidence="1">Belongs to the UPF0298 family.</text>
</comment>
<evidence type="ECO:0000255" key="1">
    <source>
        <dbReference type="HAMAP-Rule" id="MF_01126"/>
    </source>
</evidence>